<protein>
    <recommendedName>
        <fullName>Co-chaperone protein SBA1</fullName>
    </recommendedName>
</protein>
<comment type="function">
    <text evidence="3">Acts as a co-chaperone.</text>
</comment>
<comment type="subunit">
    <text evidence="5">Interacts with HSP82.</text>
</comment>
<comment type="interaction">
    <interactant intactId="EBI-26838">
        <id>P28707</id>
    </interactant>
    <interactant intactId="EBI-8659">
        <id>P02829</id>
        <label>HSP82</label>
    </interactant>
    <organismsDiffer>false</organismsDiffer>
    <experiments>7</experiments>
</comment>
<comment type="miscellaneous">
    <text evidence="4">Present with 33700 molecules/cell in log phase SD medium.</text>
</comment>
<comment type="similarity">
    <text evidence="7">Belongs to the p23/wos2 family.</text>
</comment>
<name>SBA1_YEAST</name>
<organism>
    <name type="scientific">Saccharomyces cerevisiae (strain ATCC 204508 / S288c)</name>
    <name type="common">Baker's yeast</name>
    <dbReference type="NCBI Taxonomy" id="559292"/>
    <lineage>
        <taxon>Eukaryota</taxon>
        <taxon>Fungi</taxon>
        <taxon>Dikarya</taxon>
        <taxon>Ascomycota</taxon>
        <taxon>Saccharomycotina</taxon>
        <taxon>Saccharomycetes</taxon>
        <taxon>Saccharomycetales</taxon>
        <taxon>Saccharomycetaceae</taxon>
        <taxon>Saccharomyces</taxon>
    </lineage>
</organism>
<evidence type="ECO:0000255" key="1">
    <source>
        <dbReference type="PROSITE-ProRule" id="PRU00547"/>
    </source>
</evidence>
<evidence type="ECO:0000256" key="2">
    <source>
        <dbReference type="SAM" id="MobiDB-lite"/>
    </source>
</evidence>
<evidence type="ECO:0000269" key="3">
    <source>
    </source>
</evidence>
<evidence type="ECO:0000269" key="4">
    <source>
    </source>
</evidence>
<evidence type="ECO:0000269" key="5">
    <source>
    </source>
</evidence>
<evidence type="ECO:0000269" key="6">
    <source>
    </source>
</evidence>
<evidence type="ECO:0000305" key="7"/>
<evidence type="ECO:0007829" key="8">
    <source>
        <dbReference type="PDB" id="2CG9"/>
    </source>
</evidence>
<sequence length="216" mass="24082">MSDKVINPQVAWAQRSSTTDPERNYVLITVSIADCDAPELTIKPSYIELKAQSKPHVGDENVHHYQLHIDLYKEIIPEKTMHKVANGQHYFLKLYKKDLESEYWPRLTKEKVKYPYIKTDFDKWVDEDEQDEVEAEGNDAAQGMDFSQMMGGAGGAGGAGGMDFSQMMGGAGGAGSPDMAQLQQLLAQSGGNLDMGDFKENDEEDEEEEIEPEVKA</sequence>
<proteinExistence type="evidence at protein level"/>
<reference key="1">
    <citation type="journal article" date="1992" name="Yeast">
        <title>Sequence of a 10.7 kb segment of yeast chromosome XI identifies the APN1 and the BAF1 loci and reveals one tRNA gene and several new open reading frames including homologs to RAD2 and kinases.</title>
        <authorList>
            <person name="Jacquier A."/>
            <person name="Legrain P."/>
            <person name="Dujon B."/>
        </authorList>
    </citation>
    <scope>NUCLEOTIDE SEQUENCE [GENOMIC DNA]</scope>
</reference>
<reference key="2">
    <citation type="journal article" date="1994" name="Nature">
        <title>Complete DNA sequence of yeast chromosome XI.</title>
        <authorList>
            <person name="Dujon B."/>
            <person name="Alexandraki D."/>
            <person name="Andre B."/>
            <person name="Ansorge W."/>
            <person name="Baladron V."/>
            <person name="Ballesta J.P.G."/>
            <person name="Banrevi A."/>
            <person name="Bolle P.-A."/>
            <person name="Bolotin-Fukuhara M."/>
            <person name="Bossier P."/>
            <person name="Bou G."/>
            <person name="Boyer J."/>
            <person name="Buitrago M.J."/>
            <person name="Cheret G."/>
            <person name="Colleaux L."/>
            <person name="Daignan-Fornier B."/>
            <person name="del Rey F."/>
            <person name="Dion C."/>
            <person name="Domdey H."/>
            <person name="Duesterhoeft A."/>
            <person name="Duesterhus S."/>
            <person name="Entian K.-D."/>
            <person name="Erfle H."/>
            <person name="Esteban P.F."/>
            <person name="Feldmann H."/>
            <person name="Fernandes L."/>
            <person name="Fobo G.M."/>
            <person name="Fritz C."/>
            <person name="Fukuhara H."/>
            <person name="Gabel C."/>
            <person name="Gaillon L."/>
            <person name="Garcia-Cantalejo J.M."/>
            <person name="Garcia-Ramirez J.J."/>
            <person name="Gent M.E."/>
            <person name="Ghazvini M."/>
            <person name="Goffeau A."/>
            <person name="Gonzalez A."/>
            <person name="Grothues D."/>
            <person name="Guerreiro P."/>
            <person name="Hegemann J.H."/>
            <person name="Hewitt N."/>
            <person name="Hilger F."/>
            <person name="Hollenberg C.P."/>
            <person name="Horaitis O."/>
            <person name="Indge K.J."/>
            <person name="Jacquier A."/>
            <person name="James C.M."/>
            <person name="Jauniaux J.-C."/>
            <person name="Jimenez A."/>
            <person name="Keuchel H."/>
            <person name="Kirchrath L."/>
            <person name="Kleine K."/>
            <person name="Koetter P."/>
            <person name="Legrain P."/>
            <person name="Liebl S."/>
            <person name="Louis E.J."/>
            <person name="Maia e Silva A."/>
            <person name="Marck C."/>
            <person name="Monnier A.-L."/>
            <person name="Moestl D."/>
            <person name="Mueller S."/>
            <person name="Obermaier B."/>
            <person name="Oliver S.G."/>
            <person name="Pallier C."/>
            <person name="Pascolo S."/>
            <person name="Pfeiffer F."/>
            <person name="Philippsen P."/>
            <person name="Planta R.J."/>
            <person name="Pohl F.M."/>
            <person name="Pohl T.M."/>
            <person name="Poehlmann R."/>
            <person name="Portetelle D."/>
            <person name="Purnelle B."/>
            <person name="Puzos V."/>
            <person name="Ramezani Rad M."/>
            <person name="Rasmussen S.W."/>
            <person name="Remacha M.A."/>
            <person name="Revuelta J.L."/>
            <person name="Richard G.-F."/>
            <person name="Rieger M."/>
            <person name="Rodrigues-Pousada C."/>
            <person name="Rose M."/>
            <person name="Rupp T."/>
            <person name="Santos M.A."/>
            <person name="Schwager C."/>
            <person name="Sensen C."/>
            <person name="Skala J."/>
            <person name="Soares H."/>
            <person name="Sor F."/>
            <person name="Stegemann J."/>
            <person name="Tettelin H."/>
            <person name="Thierry A."/>
            <person name="Tzermia M."/>
            <person name="Urrestarazu L.A."/>
            <person name="van Dyck L."/>
            <person name="van Vliet-Reedijk J.C."/>
            <person name="Valens M."/>
            <person name="Vandenbol M."/>
            <person name="Vilela C."/>
            <person name="Vissers S."/>
            <person name="von Wettstein D."/>
            <person name="Voss H."/>
            <person name="Wiemann S."/>
            <person name="Xu G."/>
            <person name="Zimmermann J."/>
            <person name="Haasemann M."/>
            <person name="Becker I."/>
            <person name="Mewes H.-W."/>
        </authorList>
    </citation>
    <scope>NUCLEOTIDE SEQUENCE [LARGE SCALE GENOMIC DNA]</scope>
    <source>
        <strain>ATCC 204508 / S288c</strain>
    </source>
</reference>
<reference key="3">
    <citation type="journal article" date="2014" name="G3 (Bethesda)">
        <title>The reference genome sequence of Saccharomyces cerevisiae: Then and now.</title>
        <authorList>
            <person name="Engel S.R."/>
            <person name="Dietrich F.S."/>
            <person name="Fisk D.G."/>
            <person name="Binkley G."/>
            <person name="Balakrishnan R."/>
            <person name="Costanzo M.C."/>
            <person name="Dwight S.S."/>
            <person name="Hitz B.C."/>
            <person name="Karra K."/>
            <person name="Nash R.S."/>
            <person name="Weng S."/>
            <person name="Wong E.D."/>
            <person name="Lloyd P."/>
            <person name="Skrzypek M.S."/>
            <person name="Miyasato S.R."/>
            <person name="Simison M."/>
            <person name="Cherry J.M."/>
        </authorList>
    </citation>
    <scope>GENOME REANNOTATION</scope>
    <source>
        <strain>ATCC 204508 / S288c</strain>
    </source>
</reference>
<reference key="4">
    <citation type="journal article" date="1997" name="Electrophoresis">
        <title>Proteome studies of Saccharomyces cerevisiae: identification and characterization of abundant proteins.</title>
        <authorList>
            <person name="Garrels J.I."/>
            <person name="McLaughlin C.S."/>
            <person name="Warner J.R."/>
            <person name="Futcher B."/>
            <person name="Latter G.I."/>
            <person name="Kobayashi R."/>
            <person name="Schwender B."/>
            <person name="Volpe T."/>
            <person name="Anderson D.S."/>
            <person name="Mesquita-Fuentes R."/>
            <person name="Payne W.E."/>
        </authorList>
    </citation>
    <scope>ACETYLATION AT SER-2</scope>
</reference>
<reference key="5">
    <citation type="journal article" date="2000" name="Genes Dev.">
        <title>The p23 molecular chaperones act at a late step in intracellular receptor action to differentially affect ligand efficacies.</title>
        <authorList>
            <person name="Freeman B.C."/>
            <person name="Felts S.J."/>
            <person name="Toft D.O."/>
            <person name="Yamamoto K.R."/>
        </authorList>
    </citation>
    <scope>FUNCTION</scope>
</reference>
<reference key="6">
    <citation type="journal article" date="2003" name="Nature">
        <title>Global analysis of protein expression in yeast.</title>
        <authorList>
            <person name="Ghaemmaghami S."/>
            <person name="Huh W.-K."/>
            <person name="Bower K."/>
            <person name="Howson R.W."/>
            <person name="Belle A."/>
            <person name="Dephoure N."/>
            <person name="O'Shea E.K."/>
            <person name="Weissman J.S."/>
        </authorList>
    </citation>
    <scope>LEVEL OF PROTEIN EXPRESSION [LARGE SCALE ANALYSIS]</scope>
</reference>
<reference key="7">
    <citation type="journal article" date="2006" name="Nature">
        <title>Crystal structure of an Hsp90-nucleotide-p23/Sba1 closed chaperone complex.</title>
        <authorList>
            <person name="Ali M.M."/>
            <person name="Roe S.M."/>
            <person name="Vaughan C.K."/>
            <person name="Meyer P."/>
            <person name="Panaretou B."/>
            <person name="Piper P.W."/>
            <person name="Prodromou C."/>
            <person name="Pearl L.H."/>
        </authorList>
    </citation>
    <scope>X-RAY CRYSTALLOGRAPHY (3.10 ANGSTROMS) OF 2-135 IN COMPLEX WITH HSP82</scope>
</reference>
<dbReference type="EMBL" id="S93804">
    <property type="protein sequence ID" value="AAB22000.1"/>
    <property type="molecule type" value="Genomic_DNA"/>
</dbReference>
<dbReference type="EMBL" id="Z28117">
    <property type="protein sequence ID" value="CAA81957.1"/>
    <property type="molecule type" value="Genomic_DNA"/>
</dbReference>
<dbReference type="EMBL" id="BK006944">
    <property type="protein sequence ID" value="DAA09042.1"/>
    <property type="molecule type" value="Genomic_DNA"/>
</dbReference>
<dbReference type="PIR" id="S27382">
    <property type="entry name" value="S27382"/>
</dbReference>
<dbReference type="RefSeq" id="NP_012805.1">
    <property type="nucleotide sequence ID" value="NM_001179683.1"/>
</dbReference>
<dbReference type="PDB" id="2CG9">
    <property type="method" value="X-ray"/>
    <property type="resolution" value="3.10 A"/>
    <property type="chains" value="X/Y=2-135"/>
</dbReference>
<dbReference type="PDBsum" id="2CG9"/>
<dbReference type="SMR" id="P28707"/>
<dbReference type="BioGRID" id="34018">
    <property type="interactions" value="394"/>
</dbReference>
<dbReference type="DIP" id="DIP-2311N"/>
<dbReference type="FunCoup" id="P28707">
    <property type="interactions" value="1398"/>
</dbReference>
<dbReference type="IntAct" id="P28707">
    <property type="interactions" value="18"/>
</dbReference>
<dbReference type="MINT" id="P28707"/>
<dbReference type="STRING" id="4932.YKL117W"/>
<dbReference type="iPTMnet" id="P28707"/>
<dbReference type="PaxDb" id="4932-YKL117W"/>
<dbReference type="PeptideAtlas" id="P28707"/>
<dbReference type="TopDownProteomics" id="P28707"/>
<dbReference type="EnsemblFungi" id="YKL117W_mRNA">
    <property type="protein sequence ID" value="YKL117W"/>
    <property type="gene ID" value="YKL117W"/>
</dbReference>
<dbReference type="GeneID" id="853743"/>
<dbReference type="KEGG" id="sce:YKL117W"/>
<dbReference type="AGR" id="SGD:S000001600"/>
<dbReference type="SGD" id="S000001600">
    <property type="gene designation" value="SBA1"/>
</dbReference>
<dbReference type="VEuPathDB" id="FungiDB:YKL117W"/>
<dbReference type="eggNOG" id="KOG3158">
    <property type="taxonomic scope" value="Eukaryota"/>
</dbReference>
<dbReference type="GeneTree" id="ENSGT00880000138731"/>
<dbReference type="HOGENOM" id="CLU_078883_0_1_1"/>
<dbReference type="InParanoid" id="P28707"/>
<dbReference type="OMA" id="EEGPYWP"/>
<dbReference type="OrthoDB" id="1564555at2759"/>
<dbReference type="BioCyc" id="YEAST:G3O-31901-MONOMER"/>
<dbReference type="Reactome" id="R-SCE-2162123">
    <property type="pathway name" value="Synthesis of Prostaglandins (PG) and Thromboxanes (TX)"/>
</dbReference>
<dbReference type="Reactome" id="R-SCE-3371511">
    <property type="pathway name" value="HSF1 activation"/>
</dbReference>
<dbReference type="BioGRID-ORCS" id="853743">
    <property type="hits" value="1 hit in 10 CRISPR screens"/>
</dbReference>
<dbReference type="EvolutionaryTrace" id="P28707"/>
<dbReference type="PRO" id="PR:P28707"/>
<dbReference type="Proteomes" id="UP000002311">
    <property type="component" value="Chromosome XI"/>
</dbReference>
<dbReference type="RNAct" id="P28707">
    <property type="molecule type" value="protein"/>
</dbReference>
<dbReference type="GO" id="GO:0005737">
    <property type="term" value="C:cytoplasm"/>
    <property type="evidence" value="ECO:0000314"/>
    <property type="project" value="SGD"/>
</dbReference>
<dbReference type="GO" id="GO:0005829">
    <property type="term" value="C:cytosol"/>
    <property type="evidence" value="ECO:0000318"/>
    <property type="project" value="GO_Central"/>
</dbReference>
<dbReference type="GO" id="GO:0005634">
    <property type="term" value="C:nucleus"/>
    <property type="evidence" value="ECO:0000314"/>
    <property type="project" value="SGD"/>
</dbReference>
<dbReference type="GO" id="GO:0051879">
    <property type="term" value="F:Hsp90 protein binding"/>
    <property type="evidence" value="ECO:0000318"/>
    <property type="project" value="GO_Central"/>
</dbReference>
<dbReference type="GO" id="GO:0051087">
    <property type="term" value="F:protein-folding chaperone binding"/>
    <property type="evidence" value="ECO:0000315"/>
    <property type="project" value="SGD"/>
</dbReference>
<dbReference type="GO" id="GO:0051131">
    <property type="term" value="P:chaperone-mediated protein complex assembly"/>
    <property type="evidence" value="ECO:0000318"/>
    <property type="project" value="GO_Central"/>
</dbReference>
<dbReference type="GO" id="GO:0032212">
    <property type="term" value="P:positive regulation of telomere maintenance via telomerase"/>
    <property type="evidence" value="ECO:0000314"/>
    <property type="project" value="SGD"/>
</dbReference>
<dbReference type="GO" id="GO:0006457">
    <property type="term" value="P:protein folding"/>
    <property type="evidence" value="ECO:0000315"/>
    <property type="project" value="SGD"/>
</dbReference>
<dbReference type="CDD" id="cd06465">
    <property type="entry name" value="p23_hB-ind1_like"/>
    <property type="match status" value="1"/>
</dbReference>
<dbReference type="FunFam" id="2.60.40.790:FF:000055">
    <property type="entry name" value="HSP90 associated co-chaperone"/>
    <property type="match status" value="1"/>
</dbReference>
<dbReference type="Gene3D" id="2.60.40.790">
    <property type="match status" value="1"/>
</dbReference>
<dbReference type="InterPro" id="IPR007052">
    <property type="entry name" value="CS_dom"/>
</dbReference>
<dbReference type="InterPro" id="IPR008978">
    <property type="entry name" value="HSP20-like_chaperone"/>
</dbReference>
<dbReference type="InterPro" id="IPR045250">
    <property type="entry name" value="p23-like"/>
</dbReference>
<dbReference type="PANTHER" id="PTHR22932:SF1">
    <property type="entry name" value="CO-CHAPERONE PROTEIN DAF-41"/>
    <property type="match status" value="1"/>
</dbReference>
<dbReference type="PANTHER" id="PTHR22932">
    <property type="entry name" value="TELOMERASE-BINDING PROTEIN P23 HSP90 CO-CHAPERONE"/>
    <property type="match status" value="1"/>
</dbReference>
<dbReference type="SUPFAM" id="SSF49764">
    <property type="entry name" value="HSP20-like chaperones"/>
    <property type="match status" value="1"/>
</dbReference>
<dbReference type="PROSITE" id="PS51203">
    <property type="entry name" value="CS"/>
    <property type="match status" value="1"/>
</dbReference>
<keyword id="KW-0002">3D-structure</keyword>
<keyword id="KW-0007">Acetylation</keyword>
<keyword id="KW-0143">Chaperone</keyword>
<keyword id="KW-1185">Reference proteome</keyword>
<keyword id="KW-0677">Repeat</keyword>
<gene>
    <name type="primary">SBA1</name>
    <name type="ordered locus">YKL117W</name>
    <name type="ORF">YKL518</name>
</gene>
<accession>P28707</accession>
<accession>D6VXH2</accession>
<feature type="initiator methionine" description="Removed" evidence="6">
    <location>
        <position position="1"/>
    </location>
</feature>
<feature type="chain" id="PRO_0000218959" description="Co-chaperone protein SBA1">
    <location>
        <begin position="2"/>
        <end position="216"/>
    </location>
</feature>
<feature type="domain" description="CS" evidence="1">
    <location>
        <begin position="5"/>
        <end position="108"/>
    </location>
</feature>
<feature type="repeat">
    <location>
        <begin position="141"/>
        <end position="156"/>
    </location>
</feature>
<feature type="repeat">
    <location>
        <begin position="160"/>
        <end position="174"/>
    </location>
</feature>
<feature type="region of interest" description="Disordered" evidence="2">
    <location>
        <begin position="169"/>
        <end position="216"/>
    </location>
</feature>
<feature type="compositionally biased region" description="Acidic residues" evidence="2">
    <location>
        <begin position="200"/>
        <end position="216"/>
    </location>
</feature>
<feature type="modified residue" description="N-acetylserine" evidence="6">
    <location>
        <position position="2"/>
    </location>
</feature>
<feature type="strand" evidence="8">
    <location>
        <begin position="17"/>
        <end position="19"/>
    </location>
</feature>
<feature type="strand" evidence="8">
    <location>
        <begin position="23"/>
        <end position="29"/>
    </location>
</feature>
<feature type="strand" evidence="8">
    <location>
        <begin position="33"/>
        <end position="37"/>
    </location>
</feature>
<feature type="strand" evidence="8">
    <location>
        <begin position="44"/>
        <end position="49"/>
    </location>
</feature>
<feature type="strand" evidence="8">
    <location>
        <begin position="63"/>
        <end position="65"/>
    </location>
</feature>
<feature type="strand" evidence="8">
    <location>
        <begin position="67"/>
        <end position="70"/>
    </location>
</feature>
<feature type="strand" evidence="8">
    <location>
        <begin position="77"/>
        <end position="84"/>
    </location>
</feature>
<feature type="strand" evidence="8">
    <location>
        <begin position="91"/>
        <end position="96"/>
    </location>
</feature>
<feature type="strand" evidence="8">
    <location>
        <begin position="98"/>
        <end position="101"/>
    </location>
</feature>
<feature type="strand" evidence="8">
    <location>
        <begin position="107"/>
        <end position="110"/>
    </location>
</feature>
<feature type="strand" evidence="8">
    <location>
        <begin position="115"/>
        <end position="119"/>
    </location>
</feature>
<feature type="turn" evidence="8">
    <location>
        <begin position="121"/>
        <end position="123"/>
    </location>
</feature>
<feature type="strand" evidence="8">
    <location>
        <begin position="127"/>
        <end position="131"/>
    </location>
</feature>